<keyword id="KW-0227">DNA damage</keyword>
<keyword id="KW-0234">DNA repair</keyword>
<keyword id="KW-0378">Hydrolase</keyword>
<reference key="1">
    <citation type="journal article" date="2005" name="Proc. Natl. Acad. Sci. U.S.A.">
        <title>Comparison of the complete genome sequences of Pseudomonas syringae pv. syringae B728a and pv. tomato DC3000.</title>
        <authorList>
            <person name="Feil H."/>
            <person name="Feil W.S."/>
            <person name="Chain P."/>
            <person name="Larimer F."/>
            <person name="Dibartolo G."/>
            <person name="Copeland A."/>
            <person name="Lykidis A."/>
            <person name="Trong S."/>
            <person name="Nolan M."/>
            <person name="Goltsman E."/>
            <person name="Thiel J."/>
            <person name="Malfatti S."/>
            <person name="Loper J.E."/>
            <person name="Lapidus A."/>
            <person name="Detter J.C."/>
            <person name="Land M."/>
            <person name="Richardson P.M."/>
            <person name="Kyrpides N.C."/>
            <person name="Ivanova N."/>
            <person name="Lindow S.E."/>
        </authorList>
    </citation>
    <scope>NUCLEOTIDE SEQUENCE [LARGE SCALE GENOMIC DNA]</scope>
    <source>
        <strain>B728a</strain>
    </source>
</reference>
<accession>Q4ZN72</accession>
<feature type="chain" id="PRO_1000191300" description="Putative 3-methyladenine DNA glycosylase">
    <location>
        <begin position="1"/>
        <end position="223"/>
    </location>
</feature>
<comment type="similarity">
    <text evidence="1">Belongs to the DNA glycosylase MPG family.</text>
</comment>
<sequence length="223" mass="24845">MPTALPDHFFHRDAQVLARDLLGKVIRHKAGDLWLAARIIETEAYYCAEKGSHASLGYTEKRKALFLDGGHIYMYYARGGDSLNFSAEGPGNAVLIKSAFAWTDATSDENALAQMQLNNPDASGAMRPAQRLCAGQTLLCKALGLKVPVWDAKRFDPQKLLVEDVGQTPERIIQTTRLGIPAGRDEHLMYRFVDAGYARFCTRNPLRRGQVEGRDYLFLDQGN</sequence>
<name>3MGH_PSEU2</name>
<gene>
    <name type="ordered locus">Psyr_4370</name>
</gene>
<protein>
    <recommendedName>
        <fullName evidence="1">Putative 3-methyladenine DNA glycosylase</fullName>
        <ecNumber evidence="1">3.2.2.-</ecNumber>
    </recommendedName>
</protein>
<dbReference type="EC" id="3.2.2.-" evidence="1"/>
<dbReference type="EMBL" id="CP000075">
    <property type="protein sequence ID" value="AAY39400.1"/>
    <property type="molecule type" value="Genomic_DNA"/>
</dbReference>
<dbReference type="RefSeq" id="WP_011268989.1">
    <property type="nucleotide sequence ID" value="NC_007005.1"/>
</dbReference>
<dbReference type="RefSeq" id="YP_237438.1">
    <property type="nucleotide sequence ID" value="NC_007005.1"/>
</dbReference>
<dbReference type="SMR" id="Q4ZN72"/>
<dbReference type="STRING" id="205918.Psyr_4370"/>
<dbReference type="KEGG" id="psb:Psyr_4370"/>
<dbReference type="PATRIC" id="fig|205918.7.peg.4511"/>
<dbReference type="eggNOG" id="COG2094">
    <property type="taxonomic scope" value="Bacteria"/>
</dbReference>
<dbReference type="HOGENOM" id="CLU_104187_0_0_6"/>
<dbReference type="OrthoDB" id="9794313at2"/>
<dbReference type="Proteomes" id="UP000000426">
    <property type="component" value="Chromosome"/>
</dbReference>
<dbReference type="GO" id="GO:0003905">
    <property type="term" value="F:alkylbase DNA N-glycosylase activity"/>
    <property type="evidence" value="ECO:0007669"/>
    <property type="project" value="InterPro"/>
</dbReference>
<dbReference type="GO" id="GO:0003677">
    <property type="term" value="F:DNA binding"/>
    <property type="evidence" value="ECO:0007669"/>
    <property type="project" value="InterPro"/>
</dbReference>
<dbReference type="GO" id="GO:0006284">
    <property type="term" value="P:base-excision repair"/>
    <property type="evidence" value="ECO:0007669"/>
    <property type="project" value="InterPro"/>
</dbReference>
<dbReference type="CDD" id="cd00540">
    <property type="entry name" value="AAG"/>
    <property type="match status" value="1"/>
</dbReference>
<dbReference type="Gene3D" id="3.10.300.10">
    <property type="entry name" value="Methylpurine-DNA glycosylase (MPG)"/>
    <property type="match status" value="1"/>
</dbReference>
<dbReference type="HAMAP" id="MF_00527">
    <property type="entry name" value="3MGH"/>
    <property type="match status" value="1"/>
</dbReference>
<dbReference type="InterPro" id="IPR011034">
    <property type="entry name" value="Formyl_transferase-like_C_sf"/>
</dbReference>
<dbReference type="InterPro" id="IPR003180">
    <property type="entry name" value="MPG"/>
</dbReference>
<dbReference type="InterPro" id="IPR036995">
    <property type="entry name" value="MPG_sf"/>
</dbReference>
<dbReference type="NCBIfam" id="NF002005">
    <property type="entry name" value="PRK00802.1-5"/>
    <property type="match status" value="1"/>
</dbReference>
<dbReference type="PANTHER" id="PTHR10429">
    <property type="entry name" value="DNA-3-METHYLADENINE GLYCOSYLASE"/>
    <property type="match status" value="1"/>
</dbReference>
<dbReference type="PANTHER" id="PTHR10429:SF0">
    <property type="entry name" value="DNA-3-METHYLADENINE GLYCOSYLASE"/>
    <property type="match status" value="1"/>
</dbReference>
<dbReference type="Pfam" id="PF02245">
    <property type="entry name" value="Pur_DNA_glyco"/>
    <property type="match status" value="1"/>
</dbReference>
<dbReference type="SUPFAM" id="SSF50486">
    <property type="entry name" value="FMT C-terminal domain-like"/>
    <property type="match status" value="1"/>
</dbReference>
<organism>
    <name type="scientific">Pseudomonas syringae pv. syringae (strain B728a)</name>
    <dbReference type="NCBI Taxonomy" id="205918"/>
    <lineage>
        <taxon>Bacteria</taxon>
        <taxon>Pseudomonadati</taxon>
        <taxon>Pseudomonadota</taxon>
        <taxon>Gammaproteobacteria</taxon>
        <taxon>Pseudomonadales</taxon>
        <taxon>Pseudomonadaceae</taxon>
        <taxon>Pseudomonas</taxon>
        <taxon>Pseudomonas syringae</taxon>
    </lineage>
</organism>
<evidence type="ECO:0000255" key="1">
    <source>
        <dbReference type="HAMAP-Rule" id="MF_00527"/>
    </source>
</evidence>
<proteinExistence type="inferred from homology"/>